<evidence type="ECO:0000255" key="1">
    <source>
        <dbReference type="HAMAP-Rule" id="MF_01350"/>
    </source>
</evidence>
<proteinExistence type="inferred from homology"/>
<accession>Q5X1B4</accession>
<sequence>MLHTIGILIWIIIKILVIVVPLLLSVAYLTYAERKVIGYIQVRIGPNRVGLKGLLQPFADLLKLITKEIIVPTRSNKYLFVIAPLFALVPSLVGWAVIPFQEGVVLANINAGVLYLFAMSSLGVYGVLIAGWASNSKYAMFGALRSTAQTVSYEIAMGFALVGVLLAAGSMNLTDIVNSQKGGMLHWWFIPLLPLFLVFWIAGIAETNRAPFDLAEGESEIVAGFHVEYSGIGFALFFLSEYASMILISTFMAILFMGGWLSPFEGITFLDQIFFVVPGFVWLLLKISFFLFVYLWVRATFPRYRYDQLMRLGWKVLIPVTIVWLVVTSLMVVAHVKPWF</sequence>
<organism>
    <name type="scientific">Legionella pneumophila (strain Paris)</name>
    <dbReference type="NCBI Taxonomy" id="297246"/>
    <lineage>
        <taxon>Bacteria</taxon>
        <taxon>Pseudomonadati</taxon>
        <taxon>Pseudomonadota</taxon>
        <taxon>Gammaproteobacteria</taxon>
        <taxon>Legionellales</taxon>
        <taxon>Legionellaceae</taxon>
        <taxon>Legionella</taxon>
    </lineage>
</organism>
<name>NUOH_LEGPA</name>
<dbReference type="EC" id="7.1.1.-" evidence="1"/>
<dbReference type="EMBL" id="CR628336">
    <property type="protein sequence ID" value="CAH13982.1"/>
    <property type="molecule type" value="Genomic_DNA"/>
</dbReference>
<dbReference type="RefSeq" id="WP_014844842.1">
    <property type="nucleotide sequence ID" value="NC_006368.1"/>
</dbReference>
<dbReference type="SMR" id="Q5X1B4"/>
<dbReference type="KEGG" id="lpp:lpp2829"/>
<dbReference type="LegioList" id="lpp2829"/>
<dbReference type="HOGENOM" id="CLU_015134_0_1_6"/>
<dbReference type="GO" id="GO:0005886">
    <property type="term" value="C:plasma membrane"/>
    <property type="evidence" value="ECO:0007669"/>
    <property type="project" value="UniProtKB-SubCell"/>
</dbReference>
<dbReference type="GO" id="GO:0003954">
    <property type="term" value="F:NADH dehydrogenase activity"/>
    <property type="evidence" value="ECO:0007669"/>
    <property type="project" value="TreeGrafter"/>
</dbReference>
<dbReference type="GO" id="GO:0016655">
    <property type="term" value="F:oxidoreductase activity, acting on NAD(P)H, quinone or similar compound as acceptor"/>
    <property type="evidence" value="ECO:0007669"/>
    <property type="project" value="UniProtKB-UniRule"/>
</dbReference>
<dbReference type="GO" id="GO:0048038">
    <property type="term" value="F:quinone binding"/>
    <property type="evidence" value="ECO:0007669"/>
    <property type="project" value="UniProtKB-KW"/>
</dbReference>
<dbReference type="GO" id="GO:0009060">
    <property type="term" value="P:aerobic respiration"/>
    <property type="evidence" value="ECO:0007669"/>
    <property type="project" value="TreeGrafter"/>
</dbReference>
<dbReference type="HAMAP" id="MF_01350">
    <property type="entry name" value="NDH1_NuoH"/>
    <property type="match status" value="1"/>
</dbReference>
<dbReference type="InterPro" id="IPR001694">
    <property type="entry name" value="NADH_UbQ_OxRdtase_su1/FPO"/>
</dbReference>
<dbReference type="InterPro" id="IPR018086">
    <property type="entry name" value="NADH_UbQ_OxRdtase_su1_CS"/>
</dbReference>
<dbReference type="NCBIfam" id="NF004741">
    <property type="entry name" value="PRK06076.1-2"/>
    <property type="match status" value="1"/>
</dbReference>
<dbReference type="PANTHER" id="PTHR11432">
    <property type="entry name" value="NADH DEHYDROGENASE SUBUNIT 1"/>
    <property type="match status" value="1"/>
</dbReference>
<dbReference type="PANTHER" id="PTHR11432:SF3">
    <property type="entry name" value="NADH-UBIQUINONE OXIDOREDUCTASE CHAIN 1"/>
    <property type="match status" value="1"/>
</dbReference>
<dbReference type="Pfam" id="PF00146">
    <property type="entry name" value="NADHdh"/>
    <property type="match status" value="1"/>
</dbReference>
<dbReference type="PROSITE" id="PS00668">
    <property type="entry name" value="COMPLEX1_ND1_2"/>
    <property type="match status" value="1"/>
</dbReference>
<protein>
    <recommendedName>
        <fullName evidence="1">NADH-quinone oxidoreductase subunit H</fullName>
        <ecNumber evidence="1">7.1.1.-</ecNumber>
    </recommendedName>
    <alternativeName>
        <fullName evidence="1">NADH dehydrogenase I subunit H</fullName>
    </alternativeName>
    <alternativeName>
        <fullName evidence="1">NDH-1 subunit H</fullName>
    </alternativeName>
</protein>
<reference key="1">
    <citation type="journal article" date="2004" name="Nat. Genet.">
        <title>Evidence in the Legionella pneumophila genome for exploitation of host cell functions and high genome plasticity.</title>
        <authorList>
            <person name="Cazalet C."/>
            <person name="Rusniok C."/>
            <person name="Brueggemann H."/>
            <person name="Zidane N."/>
            <person name="Magnier A."/>
            <person name="Ma L."/>
            <person name="Tichit M."/>
            <person name="Jarraud S."/>
            <person name="Bouchier C."/>
            <person name="Vandenesch F."/>
            <person name="Kunst F."/>
            <person name="Etienne J."/>
            <person name="Glaser P."/>
            <person name="Buchrieser C."/>
        </authorList>
    </citation>
    <scope>NUCLEOTIDE SEQUENCE [LARGE SCALE GENOMIC DNA]</scope>
    <source>
        <strain>Paris</strain>
    </source>
</reference>
<gene>
    <name evidence="1" type="primary">nuoH</name>
    <name type="ordered locus">lpp2829</name>
</gene>
<keyword id="KW-0997">Cell inner membrane</keyword>
<keyword id="KW-1003">Cell membrane</keyword>
<keyword id="KW-0472">Membrane</keyword>
<keyword id="KW-0520">NAD</keyword>
<keyword id="KW-0874">Quinone</keyword>
<keyword id="KW-1278">Translocase</keyword>
<keyword id="KW-0812">Transmembrane</keyword>
<keyword id="KW-1133">Transmembrane helix</keyword>
<keyword id="KW-0830">Ubiquinone</keyword>
<feature type="chain" id="PRO_0000240082" description="NADH-quinone oxidoreductase subunit H">
    <location>
        <begin position="1"/>
        <end position="340"/>
    </location>
</feature>
<feature type="transmembrane region" description="Helical" evidence="1">
    <location>
        <begin position="4"/>
        <end position="24"/>
    </location>
</feature>
<feature type="transmembrane region" description="Helical" evidence="1">
    <location>
        <begin position="78"/>
        <end position="98"/>
    </location>
</feature>
<feature type="transmembrane region" description="Helical" evidence="1">
    <location>
        <begin position="113"/>
        <end position="133"/>
    </location>
</feature>
<feature type="transmembrane region" description="Helical" evidence="1">
    <location>
        <begin position="151"/>
        <end position="171"/>
    </location>
</feature>
<feature type="transmembrane region" description="Helical" evidence="1">
    <location>
        <begin position="184"/>
        <end position="204"/>
    </location>
</feature>
<feature type="transmembrane region" description="Helical" evidence="1">
    <location>
        <begin position="244"/>
        <end position="264"/>
    </location>
</feature>
<feature type="transmembrane region" description="Helical" evidence="1">
    <location>
        <begin position="273"/>
        <end position="293"/>
    </location>
</feature>
<feature type="transmembrane region" description="Helical" evidence="1">
    <location>
        <begin position="316"/>
        <end position="336"/>
    </location>
</feature>
<comment type="function">
    <text evidence="1">NDH-1 shuttles electrons from NADH, via FMN and iron-sulfur (Fe-S) centers, to quinones in the respiratory chain. The immediate electron acceptor for the enzyme in this species is believed to be ubiquinone. Couples the redox reaction to proton translocation (for every two electrons transferred, four hydrogen ions are translocated across the cytoplasmic membrane), and thus conserves the redox energy in a proton gradient. This subunit may bind ubiquinone.</text>
</comment>
<comment type="catalytic activity">
    <reaction evidence="1">
        <text>a quinone + NADH + 5 H(+)(in) = a quinol + NAD(+) + 4 H(+)(out)</text>
        <dbReference type="Rhea" id="RHEA:57888"/>
        <dbReference type="ChEBI" id="CHEBI:15378"/>
        <dbReference type="ChEBI" id="CHEBI:24646"/>
        <dbReference type="ChEBI" id="CHEBI:57540"/>
        <dbReference type="ChEBI" id="CHEBI:57945"/>
        <dbReference type="ChEBI" id="CHEBI:132124"/>
    </reaction>
</comment>
<comment type="subunit">
    <text evidence="1">NDH-1 is composed of 14 different subunits. Subunits NuoA, H, J, K, L, M, N constitute the membrane sector of the complex.</text>
</comment>
<comment type="subcellular location">
    <subcellularLocation>
        <location evidence="1">Cell inner membrane</location>
        <topology evidence="1">Multi-pass membrane protein</topology>
    </subcellularLocation>
</comment>
<comment type="similarity">
    <text evidence="1">Belongs to the complex I subunit 1 family.</text>
</comment>